<feature type="chain" id="PRO_0000064690" description="Activating signal cointegrator 1 complex subunit 2">
    <location>
        <begin position="1"/>
        <end position="749"/>
    </location>
</feature>
<feature type="domain" description="CUE" evidence="2">
    <location>
        <begin position="465"/>
        <end position="508"/>
    </location>
</feature>
<feature type="region of interest" description="Disordered" evidence="3">
    <location>
        <begin position="1"/>
        <end position="26"/>
    </location>
</feature>
<feature type="region of interest" description="Disordered" evidence="3">
    <location>
        <begin position="606"/>
        <end position="675"/>
    </location>
</feature>
<feature type="region of interest" description="Disordered" evidence="3">
    <location>
        <begin position="689"/>
        <end position="749"/>
    </location>
</feature>
<feature type="compositionally biased region" description="Acidic residues" evidence="3">
    <location>
        <begin position="649"/>
        <end position="662"/>
    </location>
</feature>
<feature type="compositionally biased region" description="Basic and acidic residues" evidence="3">
    <location>
        <begin position="663"/>
        <end position="675"/>
    </location>
</feature>
<feature type="compositionally biased region" description="Basic and acidic residues" evidence="3">
    <location>
        <begin position="711"/>
        <end position="726"/>
    </location>
</feature>
<feature type="modified residue" description="Phosphothreonine" evidence="1">
    <location>
        <position position="233"/>
    </location>
</feature>
<feature type="modified residue" description="Phosphoserine" evidence="1">
    <location>
        <position position="625"/>
    </location>
</feature>
<feature type="splice variant" id="VSP_011012" description="In isoform 2." evidence="4">
    <location>
        <begin position="522"/>
        <end position="561"/>
    </location>
</feature>
<feature type="splice variant" id="VSP_011013" description="In isoform 3." evidence="5">
    <original>NRRTMADRKRSKGMIPS</original>
    <variation>KSFCAPEMDYERPEGLRRGAELAVCPWCLSSGCVCPC</variation>
    <location>
        <begin position="733"/>
        <end position="749"/>
    </location>
</feature>
<dbReference type="EMBL" id="AK048876">
    <property type="protein sequence ID" value="BAC33480.1"/>
    <property type="molecule type" value="mRNA"/>
</dbReference>
<dbReference type="EMBL" id="AK051387">
    <property type="protein sequence ID" value="BAC34621.1"/>
    <property type="molecule type" value="mRNA"/>
</dbReference>
<dbReference type="EMBL" id="AL606521">
    <property type="status" value="NOT_ANNOTATED_CDS"/>
    <property type="molecule type" value="Genomic_DNA"/>
</dbReference>
<dbReference type="EMBL" id="BC013537">
    <property type="protein sequence ID" value="AAH13537.1"/>
    <property type="molecule type" value="mRNA"/>
</dbReference>
<dbReference type="EMBL" id="BC024840">
    <property type="protein sequence ID" value="AAH24840.1"/>
    <property type="molecule type" value="mRNA"/>
</dbReference>
<dbReference type="CCDS" id="CCDS24387.1">
    <molecule id="Q91WR3-1"/>
</dbReference>
<dbReference type="RefSeq" id="NP_083567.1">
    <molecule id="Q91WR3-1"/>
    <property type="nucleotide sequence ID" value="NM_029291.2"/>
</dbReference>
<dbReference type="SMR" id="Q91WR3"/>
<dbReference type="BioGRID" id="217491">
    <property type="interactions" value="2"/>
</dbReference>
<dbReference type="FunCoup" id="Q91WR3">
    <property type="interactions" value="2829"/>
</dbReference>
<dbReference type="STRING" id="10090.ENSMUSP00000063272"/>
<dbReference type="GlyGen" id="Q91WR3">
    <property type="glycosylation" value="1 site"/>
</dbReference>
<dbReference type="iPTMnet" id="Q91WR3"/>
<dbReference type="PhosphoSitePlus" id="Q91WR3"/>
<dbReference type="PaxDb" id="10090-ENSMUSP00000063272"/>
<dbReference type="PeptideAtlas" id="Q91WR3"/>
<dbReference type="ProteomicsDB" id="277254">
    <molecule id="Q91WR3-1"/>
</dbReference>
<dbReference type="ProteomicsDB" id="277255">
    <molecule id="Q91WR3-2"/>
</dbReference>
<dbReference type="ProteomicsDB" id="277256">
    <molecule id="Q91WR3-3"/>
</dbReference>
<dbReference type="Pumba" id="Q91WR3"/>
<dbReference type="Antibodypedia" id="224">
    <property type="antibodies" value="182 antibodies from 26 providers"/>
</dbReference>
<dbReference type="Ensembl" id="ENSMUST00000070257.14">
    <molecule id="Q91WR3-1"/>
    <property type="protein sequence ID" value="ENSMUSP00000063272.8"/>
    <property type="gene ID" value="ENSMUSG00000020412.17"/>
</dbReference>
<dbReference type="Ensembl" id="ENSMUST00000109930.3">
    <molecule id="Q91WR3-2"/>
    <property type="protein sequence ID" value="ENSMUSP00000105556.3"/>
    <property type="gene ID" value="ENSMUSG00000020412.17"/>
</dbReference>
<dbReference type="GeneID" id="75452"/>
<dbReference type="KEGG" id="mmu:75452"/>
<dbReference type="UCSC" id="uc007hva.2">
    <molecule id="Q91WR3-1"/>
    <property type="organism name" value="mouse"/>
</dbReference>
<dbReference type="UCSC" id="uc011xqz.2">
    <molecule id="Q91WR3-2"/>
    <property type="organism name" value="mouse"/>
</dbReference>
<dbReference type="AGR" id="MGI:1922702"/>
<dbReference type="CTD" id="84164"/>
<dbReference type="MGI" id="MGI:1922702">
    <property type="gene designation" value="Ascc2"/>
</dbReference>
<dbReference type="VEuPathDB" id="HostDB:ENSMUSG00000020412"/>
<dbReference type="eggNOG" id="KOG4501">
    <property type="taxonomic scope" value="Eukaryota"/>
</dbReference>
<dbReference type="GeneTree" id="ENSGT00390000018806"/>
<dbReference type="HOGENOM" id="CLU_012749_0_0_1"/>
<dbReference type="InParanoid" id="Q91WR3"/>
<dbReference type="OMA" id="LSQHEFW"/>
<dbReference type="OrthoDB" id="5577209at2759"/>
<dbReference type="PhylomeDB" id="Q91WR3"/>
<dbReference type="TreeFam" id="TF323459"/>
<dbReference type="BioGRID-ORCS" id="75452">
    <property type="hits" value="13 hits in 82 CRISPR screens"/>
</dbReference>
<dbReference type="ChiTaRS" id="Ascc2">
    <property type="organism name" value="mouse"/>
</dbReference>
<dbReference type="PRO" id="PR:Q91WR3"/>
<dbReference type="Proteomes" id="UP000000589">
    <property type="component" value="Chromosome 11"/>
</dbReference>
<dbReference type="RNAct" id="Q91WR3">
    <property type="molecule type" value="protein"/>
</dbReference>
<dbReference type="Bgee" id="ENSMUSG00000020412">
    <property type="expression patterns" value="Expressed in paneth cell and 253 other cell types or tissues"/>
</dbReference>
<dbReference type="GO" id="GO:0022626">
    <property type="term" value="C:cytosolic ribosome"/>
    <property type="evidence" value="ECO:0007669"/>
    <property type="project" value="Ensembl"/>
</dbReference>
<dbReference type="GO" id="GO:1990391">
    <property type="term" value="C:DNA repair complex"/>
    <property type="evidence" value="ECO:0007669"/>
    <property type="project" value="Ensembl"/>
</dbReference>
<dbReference type="GO" id="GO:0016607">
    <property type="term" value="C:nuclear speck"/>
    <property type="evidence" value="ECO:0007669"/>
    <property type="project" value="UniProtKB-SubCell"/>
</dbReference>
<dbReference type="GO" id="GO:0005634">
    <property type="term" value="C:nucleus"/>
    <property type="evidence" value="ECO:0000250"/>
    <property type="project" value="UniProtKB"/>
</dbReference>
<dbReference type="GO" id="GO:0180022">
    <property type="term" value="C:RQC-trigger complex"/>
    <property type="evidence" value="ECO:0007669"/>
    <property type="project" value="Ensembl"/>
</dbReference>
<dbReference type="GO" id="GO:0070530">
    <property type="term" value="F:K63-linked polyubiquitin modification-dependent protein binding"/>
    <property type="evidence" value="ECO:0000250"/>
    <property type="project" value="UniProtKB"/>
</dbReference>
<dbReference type="GO" id="GO:0043130">
    <property type="term" value="F:ubiquitin binding"/>
    <property type="evidence" value="ECO:0007669"/>
    <property type="project" value="InterPro"/>
</dbReference>
<dbReference type="GO" id="GO:0006281">
    <property type="term" value="P:DNA repair"/>
    <property type="evidence" value="ECO:0007669"/>
    <property type="project" value="UniProtKB-KW"/>
</dbReference>
<dbReference type="GO" id="GO:0006355">
    <property type="term" value="P:regulation of DNA-templated transcription"/>
    <property type="evidence" value="ECO:0000250"/>
    <property type="project" value="UniProtKB"/>
</dbReference>
<dbReference type="GO" id="GO:0072344">
    <property type="term" value="P:rescue of stalled ribosome"/>
    <property type="evidence" value="ECO:0000250"/>
    <property type="project" value="UniProtKB"/>
</dbReference>
<dbReference type="GO" id="GO:0032790">
    <property type="term" value="P:ribosome disassembly"/>
    <property type="evidence" value="ECO:0000250"/>
    <property type="project" value="UniProtKB"/>
</dbReference>
<dbReference type="GO" id="GO:1990116">
    <property type="term" value="P:ribosome-associated ubiquitin-dependent protein catabolic process"/>
    <property type="evidence" value="ECO:0000250"/>
    <property type="project" value="UniProtKB"/>
</dbReference>
<dbReference type="CDD" id="cd14364">
    <property type="entry name" value="CUE_ASCC2"/>
    <property type="match status" value="1"/>
</dbReference>
<dbReference type="Gene3D" id="1.10.8.10">
    <property type="entry name" value="DNA helicase RuvA subunit, C-terminal domain"/>
    <property type="match status" value="1"/>
</dbReference>
<dbReference type="InterPro" id="IPR052586">
    <property type="entry name" value="ASCC2"/>
</dbReference>
<dbReference type="InterPro" id="IPR041800">
    <property type="entry name" value="ASCC2_CUE"/>
</dbReference>
<dbReference type="InterPro" id="IPR003892">
    <property type="entry name" value="CUE"/>
</dbReference>
<dbReference type="InterPro" id="IPR009060">
    <property type="entry name" value="UBA-like_sf"/>
</dbReference>
<dbReference type="PANTHER" id="PTHR21494:SF0">
    <property type="entry name" value="ACTIVATING SIGNAL COINTEGRATOR 1 COMPLEX SUBUNIT 2"/>
    <property type="match status" value="1"/>
</dbReference>
<dbReference type="PANTHER" id="PTHR21494">
    <property type="entry name" value="ACTIVATING SIGNAL COINTEGRATOR 1 COMPLEX SUBUNIT 2 ASC-1 COMPLEX SUBUNIT P100"/>
    <property type="match status" value="1"/>
</dbReference>
<dbReference type="Pfam" id="PF02845">
    <property type="entry name" value="CUE"/>
    <property type="match status" value="1"/>
</dbReference>
<dbReference type="SMART" id="SM00546">
    <property type="entry name" value="CUE"/>
    <property type="match status" value="1"/>
</dbReference>
<dbReference type="SUPFAM" id="SSF46934">
    <property type="entry name" value="UBA-like"/>
    <property type="match status" value="1"/>
</dbReference>
<dbReference type="PROSITE" id="PS51140">
    <property type="entry name" value="CUE"/>
    <property type="match status" value="1"/>
</dbReference>
<proteinExistence type="evidence at protein level"/>
<name>ASCC2_MOUSE</name>
<comment type="function">
    <text evidence="1">Ubiquitin-binding protein involved in DNA repair and rescue of stalled ribosomes. Plays a role in DNA damage repair as component of the ASCC complex. Recruits ASCC3 and ALKBH3 to sites of DNA damage by binding to polyubiquitinated proteins that have 'Lys-63'-linked polyubiquitin chains. Part of the ASC-1 complex that enhances NF-kappa-B, SRF and AP1 transactivation. Involved in activation of the ribosome quality control (RQC) pathway, a pathway that degrades nascent peptide chains during problematic translation. Specifically recognizes and binds RPS20/uS10 ubiquitinated by ZNF598, promoting recruitment of the RQT (ribosome quality control trigger) complex on stalled ribosomes, followed by disassembly of stalled ribosomes.</text>
</comment>
<comment type="subunit">
    <text evidence="1">Identified in the ASCC complex that contains ASCC1, ASCC2 and ASCC3. Interacts directly with ASCC3. The ASCC complex interacts with ALKBH3. Interacts (via CUE domain) with 'Lys-63'-linked polyubiquitin chains, but not with 'Lys-48'-linked polyubiquitin chains. Part of the ASC-1 complex, that contains TRIP4, ASCC1, ASCC2 and ASCC3. Component of the RQT (ribosome quality control trigger) complex, that contains ASCC2, ASCC3 and TRIP4. Interacts with CSRP1. Interacts with PRPF8, a component of the spliceosome. Interacts with ZCCHC4.</text>
</comment>
<comment type="subcellular location">
    <subcellularLocation>
        <location evidence="1">Nucleus</location>
    </subcellularLocation>
    <subcellularLocation>
        <location evidence="1">Nucleus speckle</location>
    </subcellularLocation>
    <text evidence="1">Colocalizes with the spliceosomal components PRPF8 and SNRNP200/BRR2 in nuclear foci when cells have been exposed to alkylating agents that cause DNA damage. Colocalizes with RNF113A and 'Lys-63'-linked polyubiquitinated proteins, ALKBH3 and ASCC3 in nuclear foci when cells have been exposed to alkylating agents that cause DNA damage.</text>
</comment>
<comment type="alternative products">
    <event type="alternative splicing"/>
    <isoform>
        <id>Q91WR3-1</id>
        <name>1</name>
        <sequence type="displayed"/>
    </isoform>
    <isoform>
        <id>Q91WR3-2</id>
        <name>2</name>
        <name>100S</name>
        <sequence type="described" ref="VSP_011012"/>
    </isoform>
    <isoform>
        <id>Q91WR3-3</id>
        <name>3</name>
        <sequence type="described" ref="VSP_011013"/>
    </isoform>
</comment>
<comment type="domain">
    <text evidence="1">The CUE domain specifically binds RPS20/uS10 ubiquitinated via 'Lys-63'-linked ubiquitin chains by ZNF598.</text>
</comment>
<comment type="miscellaneous">
    <molecule>Isoform 3</molecule>
    <text evidence="5">Incomplete sequence.</text>
</comment>
<comment type="similarity">
    <text evidence="5">Belongs to the ASCC2 family.</text>
</comment>
<reference key="1">
    <citation type="journal article" date="2005" name="Science">
        <title>The transcriptional landscape of the mammalian genome.</title>
        <authorList>
            <person name="Carninci P."/>
            <person name="Kasukawa T."/>
            <person name="Katayama S."/>
            <person name="Gough J."/>
            <person name="Frith M.C."/>
            <person name="Maeda N."/>
            <person name="Oyama R."/>
            <person name="Ravasi T."/>
            <person name="Lenhard B."/>
            <person name="Wells C."/>
            <person name="Kodzius R."/>
            <person name="Shimokawa K."/>
            <person name="Bajic V.B."/>
            <person name="Brenner S.E."/>
            <person name="Batalov S."/>
            <person name="Forrest A.R."/>
            <person name="Zavolan M."/>
            <person name="Davis M.J."/>
            <person name="Wilming L.G."/>
            <person name="Aidinis V."/>
            <person name="Allen J.E."/>
            <person name="Ambesi-Impiombato A."/>
            <person name="Apweiler R."/>
            <person name="Aturaliya R.N."/>
            <person name="Bailey T.L."/>
            <person name="Bansal M."/>
            <person name="Baxter L."/>
            <person name="Beisel K.W."/>
            <person name="Bersano T."/>
            <person name="Bono H."/>
            <person name="Chalk A.M."/>
            <person name="Chiu K.P."/>
            <person name="Choudhary V."/>
            <person name="Christoffels A."/>
            <person name="Clutterbuck D.R."/>
            <person name="Crowe M.L."/>
            <person name="Dalla E."/>
            <person name="Dalrymple B.P."/>
            <person name="de Bono B."/>
            <person name="Della Gatta G."/>
            <person name="di Bernardo D."/>
            <person name="Down T."/>
            <person name="Engstrom P."/>
            <person name="Fagiolini M."/>
            <person name="Faulkner G."/>
            <person name="Fletcher C.F."/>
            <person name="Fukushima T."/>
            <person name="Furuno M."/>
            <person name="Futaki S."/>
            <person name="Gariboldi M."/>
            <person name="Georgii-Hemming P."/>
            <person name="Gingeras T.R."/>
            <person name="Gojobori T."/>
            <person name="Green R.E."/>
            <person name="Gustincich S."/>
            <person name="Harbers M."/>
            <person name="Hayashi Y."/>
            <person name="Hensch T.K."/>
            <person name="Hirokawa N."/>
            <person name="Hill D."/>
            <person name="Huminiecki L."/>
            <person name="Iacono M."/>
            <person name="Ikeo K."/>
            <person name="Iwama A."/>
            <person name="Ishikawa T."/>
            <person name="Jakt M."/>
            <person name="Kanapin A."/>
            <person name="Katoh M."/>
            <person name="Kawasawa Y."/>
            <person name="Kelso J."/>
            <person name="Kitamura H."/>
            <person name="Kitano H."/>
            <person name="Kollias G."/>
            <person name="Krishnan S.P."/>
            <person name="Kruger A."/>
            <person name="Kummerfeld S.K."/>
            <person name="Kurochkin I.V."/>
            <person name="Lareau L.F."/>
            <person name="Lazarevic D."/>
            <person name="Lipovich L."/>
            <person name="Liu J."/>
            <person name="Liuni S."/>
            <person name="McWilliam S."/>
            <person name="Madan Babu M."/>
            <person name="Madera M."/>
            <person name="Marchionni L."/>
            <person name="Matsuda H."/>
            <person name="Matsuzawa S."/>
            <person name="Miki H."/>
            <person name="Mignone F."/>
            <person name="Miyake S."/>
            <person name="Morris K."/>
            <person name="Mottagui-Tabar S."/>
            <person name="Mulder N."/>
            <person name="Nakano N."/>
            <person name="Nakauchi H."/>
            <person name="Ng P."/>
            <person name="Nilsson R."/>
            <person name="Nishiguchi S."/>
            <person name="Nishikawa S."/>
            <person name="Nori F."/>
            <person name="Ohara O."/>
            <person name="Okazaki Y."/>
            <person name="Orlando V."/>
            <person name="Pang K.C."/>
            <person name="Pavan W.J."/>
            <person name="Pavesi G."/>
            <person name="Pesole G."/>
            <person name="Petrovsky N."/>
            <person name="Piazza S."/>
            <person name="Reed J."/>
            <person name="Reid J.F."/>
            <person name="Ring B.Z."/>
            <person name="Ringwald M."/>
            <person name="Rost B."/>
            <person name="Ruan Y."/>
            <person name="Salzberg S.L."/>
            <person name="Sandelin A."/>
            <person name="Schneider C."/>
            <person name="Schoenbach C."/>
            <person name="Sekiguchi K."/>
            <person name="Semple C.A."/>
            <person name="Seno S."/>
            <person name="Sessa L."/>
            <person name="Sheng Y."/>
            <person name="Shibata Y."/>
            <person name="Shimada H."/>
            <person name="Shimada K."/>
            <person name="Silva D."/>
            <person name="Sinclair B."/>
            <person name="Sperling S."/>
            <person name="Stupka E."/>
            <person name="Sugiura K."/>
            <person name="Sultana R."/>
            <person name="Takenaka Y."/>
            <person name="Taki K."/>
            <person name="Tammoja K."/>
            <person name="Tan S.L."/>
            <person name="Tang S."/>
            <person name="Taylor M.S."/>
            <person name="Tegner J."/>
            <person name="Teichmann S.A."/>
            <person name="Ueda H.R."/>
            <person name="van Nimwegen E."/>
            <person name="Verardo R."/>
            <person name="Wei C.L."/>
            <person name="Yagi K."/>
            <person name="Yamanishi H."/>
            <person name="Zabarovsky E."/>
            <person name="Zhu S."/>
            <person name="Zimmer A."/>
            <person name="Hide W."/>
            <person name="Bult C."/>
            <person name="Grimmond S.M."/>
            <person name="Teasdale R.D."/>
            <person name="Liu E.T."/>
            <person name="Brusic V."/>
            <person name="Quackenbush J."/>
            <person name="Wahlestedt C."/>
            <person name="Mattick J.S."/>
            <person name="Hume D.A."/>
            <person name="Kai C."/>
            <person name="Sasaki D."/>
            <person name="Tomaru Y."/>
            <person name="Fukuda S."/>
            <person name="Kanamori-Katayama M."/>
            <person name="Suzuki M."/>
            <person name="Aoki J."/>
            <person name="Arakawa T."/>
            <person name="Iida J."/>
            <person name="Imamura K."/>
            <person name="Itoh M."/>
            <person name="Kato T."/>
            <person name="Kawaji H."/>
            <person name="Kawagashira N."/>
            <person name="Kawashima T."/>
            <person name="Kojima M."/>
            <person name="Kondo S."/>
            <person name="Konno H."/>
            <person name="Nakano K."/>
            <person name="Ninomiya N."/>
            <person name="Nishio T."/>
            <person name="Okada M."/>
            <person name="Plessy C."/>
            <person name="Shibata K."/>
            <person name="Shiraki T."/>
            <person name="Suzuki S."/>
            <person name="Tagami M."/>
            <person name="Waki K."/>
            <person name="Watahiki A."/>
            <person name="Okamura-Oho Y."/>
            <person name="Suzuki H."/>
            <person name="Kawai J."/>
            <person name="Hayashizaki Y."/>
        </authorList>
    </citation>
    <scope>NUCLEOTIDE SEQUENCE [LARGE SCALE MRNA] (ISOFORM 2)</scope>
    <source>
        <strain>C57BL/6J</strain>
        <tissue>Eye</tissue>
        <tissue>Spinal ganglion</tissue>
    </source>
</reference>
<reference key="2">
    <citation type="journal article" date="2009" name="PLoS Biol.">
        <title>Lineage-specific biology revealed by a finished genome assembly of the mouse.</title>
        <authorList>
            <person name="Church D.M."/>
            <person name="Goodstadt L."/>
            <person name="Hillier L.W."/>
            <person name="Zody M.C."/>
            <person name="Goldstein S."/>
            <person name="She X."/>
            <person name="Bult C.J."/>
            <person name="Agarwala R."/>
            <person name="Cherry J.L."/>
            <person name="DiCuccio M."/>
            <person name="Hlavina W."/>
            <person name="Kapustin Y."/>
            <person name="Meric P."/>
            <person name="Maglott D."/>
            <person name="Birtle Z."/>
            <person name="Marques A.C."/>
            <person name="Graves T."/>
            <person name="Zhou S."/>
            <person name="Teague B."/>
            <person name="Potamousis K."/>
            <person name="Churas C."/>
            <person name="Place M."/>
            <person name="Herschleb J."/>
            <person name="Runnheim R."/>
            <person name="Forrest D."/>
            <person name="Amos-Landgraf J."/>
            <person name="Schwartz D.C."/>
            <person name="Cheng Z."/>
            <person name="Lindblad-Toh K."/>
            <person name="Eichler E.E."/>
            <person name="Ponting C.P."/>
        </authorList>
    </citation>
    <scope>NUCLEOTIDE SEQUENCE [LARGE SCALE GENOMIC DNA]</scope>
    <source>
        <strain>C57BL/6J</strain>
    </source>
</reference>
<reference key="3">
    <citation type="journal article" date="2004" name="Genome Res.">
        <title>The status, quality, and expansion of the NIH full-length cDNA project: the Mammalian Gene Collection (MGC).</title>
        <authorList>
            <consortium name="The MGC Project Team"/>
        </authorList>
    </citation>
    <scope>NUCLEOTIDE SEQUENCE [LARGE SCALE MRNA] (ISOFORM 1)</scope>
    <scope>PARTIAL NUCLEOTIDE SEQUENCE [LARGE SCALE MRNA] (ISOFORM 3)</scope>
    <source>
        <tissue>Eye</tissue>
        <tissue>Kidney</tissue>
    </source>
</reference>
<reference key="4">
    <citation type="journal article" date="2010" name="Cell">
        <title>A tissue-specific atlas of mouse protein phosphorylation and expression.</title>
        <authorList>
            <person name="Huttlin E.L."/>
            <person name="Jedrychowski M.P."/>
            <person name="Elias J.E."/>
            <person name="Goswami T."/>
            <person name="Rad R."/>
            <person name="Beausoleil S.A."/>
            <person name="Villen J."/>
            <person name="Haas W."/>
            <person name="Sowa M.E."/>
            <person name="Gygi S.P."/>
        </authorList>
    </citation>
    <scope>IDENTIFICATION BY MASS SPECTROMETRY [LARGE SCALE ANALYSIS]</scope>
    <source>
        <tissue>Liver</tissue>
        <tissue>Pancreas</tissue>
        <tissue>Spleen</tissue>
    </source>
</reference>
<protein>
    <recommendedName>
        <fullName>Activating signal cointegrator 1 complex subunit 2</fullName>
    </recommendedName>
    <alternativeName>
        <fullName>ASC-1 complex subunit p100</fullName>
    </alternativeName>
    <alternativeName>
        <fullName>Trip4 complex subunit p100</fullName>
    </alternativeName>
</protein>
<accession>Q91WR3</accession>
<accession>Q5NCK1</accession>
<accession>Q8BKM9</accession>
<accession>Q8BX60</accession>
<accession>Q8R1B9</accession>
<evidence type="ECO:0000250" key="1">
    <source>
        <dbReference type="UniProtKB" id="Q9H1I8"/>
    </source>
</evidence>
<evidence type="ECO:0000255" key="2">
    <source>
        <dbReference type="PROSITE-ProRule" id="PRU00468"/>
    </source>
</evidence>
<evidence type="ECO:0000256" key="3">
    <source>
        <dbReference type="SAM" id="MobiDB-lite"/>
    </source>
</evidence>
<evidence type="ECO:0000303" key="4">
    <source>
    </source>
</evidence>
<evidence type="ECO:0000305" key="5"/>
<organism>
    <name type="scientific">Mus musculus</name>
    <name type="common">Mouse</name>
    <dbReference type="NCBI Taxonomy" id="10090"/>
    <lineage>
        <taxon>Eukaryota</taxon>
        <taxon>Metazoa</taxon>
        <taxon>Chordata</taxon>
        <taxon>Craniata</taxon>
        <taxon>Vertebrata</taxon>
        <taxon>Euteleostomi</taxon>
        <taxon>Mammalia</taxon>
        <taxon>Eutheria</taxon>
        <taxon>Euarchontoglires</taxon>
        <taxon>Glires</taxon>
        <taxon>Rodentia</taxon>
        <taxon>Myomorpha</taxon>
        <taxon>Muroidea</taxon>
        <taxon>Muridae</taxon>
        <taxon>Murinae</taxon>
        <taxon>Mus</taxon>
        <taxon>Mus</taxon>
    </lineage>
</organism>
<sequence length="749" mass="85653">MPALPLDQLQITHKDPKTGQPKTSAALNPEQKADRYFVLYKPPPKDNIPALVEEYLERANFVANDLDWLLALPHDKFWCQVIFDETLQKCLDSYLHYVPRKFDEWVAPTPEVADMQNHLHRSVFLTFLRMSTHKESKDHFISPSAFGEILYNNFLFDIPKILDLCVLFGKGNSPLLQKMIGNIFTQQPSYYTDLDETIPTILQVFSNILQHCGLQGDGTSTTPQKLGERSPLTPSDMPLLELKDIVLYLCDTSTTLWAFLDIFPLACQTFQKHDFCYRLASFYEMAIPELESAIKKRRLEDSKLLGDMWQRLSHSKKKLMEVFHIILNQICLLPILESSCDNIQGFIEEFLQIFSSLLQEKRFLRDYDTFSPVAEDISLLQQASSALDETRTAYILQAVESAWEGVDRQKIKDIKDPPRAKGSNNEVTVTAEPVSEMPSQLENLEEDEECMGAAAALGPAVSGVELDSLISQVKDLLPDLGEGFILACLEHYSYDSEQVINNILEDRLAPELSQLDRGLERQVKPDPTPLLSSRHNIFQNDEFDVFSRDSVDLSRVHKGRRKEENVRSLVNDKQAVVAQWQRYQKYSVVVEEVPLQPGEYQADDYEDEYDDTYDGNQVGANDADSDDELISRRPFTIPQVLRTKMPGEVQEEEWDEEDEVEEEAPKPDHFIQDPAVLREKAEARRMAFLARKGYRPENSTAVTGGPRGHGQSRETTQERRKKEANKAARANHNRRTMADRKRSKGMIPS</sequence>
<gene>
    <name type="primary">Ascc2</name>
    <name type="synonym">Asc1p100</name>
</gene>
<keyword id="KW-0025">Alternative splicing</keyword>
<keyword id="KW-0227">DNA damage</keyword>
<keyword id="KW-0234">DNA repair</keyword>
<keyword id="KW-0539">Nucleus</keyword>
<keyword id="KW-0597">Phosphoprotein</keyword>
<keyword id="KW-1185">Reference proteome</keyword>
<keyword id="KW-0804">Transcription</keyword>
<keyword id="KW-0805">Transcription regulation</keyword>